<accession>B0UWS7</accession>
<organism>
    <name type="scientific">Histophilus somni (strain 2336)</name>
    <name type="common">Haemophilus somnus</name>
    <dbReference type="NCBI Taxonomy" id="228400"/>
    <lineage>
        <taxon>Bacteria</taxon>
        <taxon>Pseudomonadati</taxon>
        <taxon>Pseudomonadota</taxon>
        <taxon>Gammaproteobacteria</taxon>
        <taxon>Pasteurellales</taxon>
        <taxon>Pasteurellaceae</taxon>
        <taxon>Histophilus</taxon>
    </lineage>
</organism>
<keyword id="KW-0067">ATP-binding</keyword>
<keyword id="KW-0963">Cytoplasm</keyword>
<keyword id="KW-0210">Decarboxylase</keyword>
<keyword id="KW-0312">Gluconeogenesis</keyword>
<keyword id="KW-0456">Lyase</keyword>
<keyword id="KW-0464">Manganese</keyword>
<keyword id="KW-0479">Metal-binding</keyword>
<keyword id="KW-0547">Nucleotide-binding</keyword>
<evidence type="ECO:0000255" key="1">
    <source>
        <dbReference type="HAMAP-Rule" id="MF_00453"/>
    </source>
</evidence>
<dbReference type="EC" id="4.1.1.49" evidence="1"/>
<dbReference type="EMBL" id="CP000947">
    <property type="protein sequence ID" value="ACA32020.1"/>
    <property type="molecule type" value="Genomic_DNA"/>
</dbReference>
<dbReference type="RefSeq" id="WP_011609774.1">
    <property type="nucleotide sequence ID" value="NC_010519.1"/>
</dbReference>
<dbReference type="SMR" id="B0UWS7"/>
<dbReference type="STRING" id="228400.HSM_0381"/>
<dbReference type="GeneID" id="31486661"/>
<dbReference type="KEGG" id="hsm:HSM_0381"/>
<dbReference type="HOGENOM" id="CLU_018247_0_1_6"/>
<dbReference type="UniPathway" id="UPA00138"/>
<dbReference type="GO" id="GO:0005829">
    <property type="term" value="C:cytosol"/>
    <property type="evidence" value="ECO:0007669"/>
    <property type="project" value="TreeGrafter"/>
</dbReference>
<dbReference type="GO" id="GO:0005524">
    <property type="term" value="F:ATP binding"/>
    <property type="evidence" value="ECO:0007669"/>
    <property type="project" value="UniProtKB-UniRule"/>
</dbReference>
<dbReference type="GO" id="GO:0046872">
    <property type="term" value="F:metal ion binding"/>
    <property type="evidence" value="ECO:0007669"/>
    <property type="project" value="UniProtKB-KW"/>
</dbReference>
<dbReference type="GO" id="GO:0004612">
    <property type="term" value="F:phosphoenolpyruvate carboxykinase (ATP) activity"/>
    <property type="evidence" value="ECO:0007669"/>
    <property type="project" value="UniProtKB-UniRule"/>
</dbReference>
<dbReference type="GO" id="GO:0006094">
    <property type="term" value="P:gluconeogenesis"/>
    <property type="evidence" value="ECO:0007669"/>
    <property type="project" value="UniProtKB-UniRule"/>
</dbReference>
<dbReference type="CDD" id="cd00484">
    <property type="entry name" value="PEPCK_ATP"/>
    <property type="match status" value="1"/>
</dbReference>
<dbReference type="FunFam" id="2.170.8.10:FF:000001">
    <property type="entry name" value="Phosphoenolpyruvate carboxykinase (ATP)"/>
    <property type="match status" value="1"/>
</dbReference>
<dbReference type="FunFam" id="3.40.449.10:FF:000001">
    <property type="entry name" value="Phosphoenolpyruvate carboxykinase (ATP)"/>
    <property type="match status" value="1"/>
</dbReference>
<dbReference type="Gene3D" id="3.90.228.20">
    <property type="match status" value="1"/>
</dbReference>
<dbReference type="Gene3D" id="3.40.449.10">
    <property type="entry name" value="Phosphoenolpyruvate Carboxykinase, domain 1"/>
    <property type="match status" value="1"/>
</dbReference>
<dbReference type="Gene3D" id="2.170.8.10">
    <property type="entry name" value="Phosphoenolpyruvate Carboxykinase, domain 2"/>
    <property type="match status" value="1"/>
</dbReference>
<dbReference type="HAMAP" id="MF_00453">
    <property type="entry name" value="PEPCK_ATP"/>
    <property type="match status" value="1"/>
</dbReference>
<dbReference type="InterPro" id="IPR001272">
    <property type="entry name" value="PEP_carboxykinase_ATP"/>
</dbReference>
<dbReference type="InterPro" id="IPR013035">
    <property type="entry name" value="PEP_carboxykinase_C"/>
</dbReference>
<dbReference type="InterPro" id="IPR008210">
    <property type="entry name" value="PEP_carboxykinase_N"/>
</dbReference>
<dbReference type="InterPro" id="IPR015994">
    <property type="entry name" value="PEPCK_ATP_CS"/>
</dbReference>
<dbReference type="NCBIfam" id="TIGR00224">
    <property type="entry name" value="pckA"/>
    <property type="match status" value="1"/>
</dbReference>
<dbReference type="NCBIfam" id="NF006819">
    <property type="entry name" value="PRK09344.1-1"/>
    <property type="match status" value="1"/>
</dbReference>
<dbReference type="NCBIfam" id="NF006820">
    <property type="entry name" value="PRK09344.1-2"/>
    <property type="match status" value="1"/>
</dbReference>
<dbReference type="NCBIfam" id="NF006821">
    <property type="entry name" value="PRK09344.1-3"/>
    <property type="match status" value="1"/>
</dbReference>
<dbReference type="PANTHER" id="PTHR30031:SF0">
    <property type="entry name" value="PHOSPHOENOLPYRUVATE CARBOXYKINASE (ATP)"/>
    <property type="match status" value="1"/>
</dbReference>
<dbReference type="PANTHER" id="PTHR30031">
    <property type="entry name" value="PHOSPHOENOLPYRUVATE CARBOXYKINASE ATP"/>
    <property type="match status" value="1"/>
</dbReference>
<dbReference type="Pfam" id="PF01293">
    <property type="entry name" value="PEPCK_ATP"/>
    <property type="match status" value="1"/>
</dbReference>
<dbReference type="PIRSF" id="PIRSF006294">
    <property type="entry name" value="PEP_crbxkin"/>
    <property type="match status" value="1"/>
</dbReference>
<dbReference type="SUPFAM" id="SSF68923">
    <property type="entry name" value="PEP carboxykinase N-terminal domain"/>
    <property type="match status" value="1"/>
</dbReference>
<dbReference type="SUPFAM" id="SSF53795">
    <property type="entry name" value="PEP carboxykinase-like"/>
    <property type="match status" value="1"/>
</dbReference>
<dbReference type="PROSITE" id="PS00532">
    <property type="entry name" value="PEPCK_ATP"/>
    <property type="match status" value="1"/>
</dbReference>
<proteinExistence type="inferred from homology"/>
<gene>
    <name evidence="1" type="primary">pckA</name>
    <name type="ordered locus">HSM_0381</name>
</gene>
<comment type="function">
    <text evidence="1">Involved in the gluconeogenesis. Catalyzes the conversion of oxaloacetate (OAA) to phosphoenolpyruvate (PEP) through direct phosphoryl transfer between the nucleoside triphosphate and OAA.</text>
</comment>
<comment type="catalytic activity">
    <reaction evidence="1">
        <text>oxaloacetate + ATP = phosphoenolpyruvate + ADP + CO2</text>
        <dbReference type="Rhea" id="RHEA:18617"/>
        <dbReference type="ChEBI" id="CHEBI:16452"/>
        <dbReference type="ChEBI" id="CHEBI:16526"/>
        <dbReference type="ChEBI" id="CHEBI:30616"/>
        <dbReference type="ChEBI" id="CHEBI:58702"/>
        <dbReference type="ChEBI" id="CHEBI:456216"/>
        <dbReference type="EC" id="4.1.1.49"/>
    </reaction>
</comment>
<comment type="cofactor">
    <cofactor evidence="1">
        <name>Mn(2+)</name>
        <dbReference type="ChEBI" id="CHEBI:29035"/>
    </cofactor>
    <text evidence="1">Binds 1 Mn(2+) ion per subunit.</text>
</comment>
<comment type="pathway">
    <text evidence="1">Carbohydrate biosynthesis; gluconeogenesis.</text>
</comment>
<comment type="subunit">
    <text evidence="1">Monomer.</text>
</comment>
<comment type="subcellular location">
    <subcellularLocation>
        <location evidence="1">Cytoplasm</location>
    </subcellularLocation>
</comment>
<comment type="similarity">
    <text evidence="1">Belongs to the phosphoenolpyruvate carboxykinase (ATP) family.</text>
</comment>
<sequence length="538" mass="59067">MTDLNKVINELGELGIYDVKEIVHNPSYEQLFEEETKPGLAGFEKGVVTTSGAVAVDTGIFTGRSPKDKYIVLDEKTKNTVWWTSDAAKNDNKPMNQETWQSLKGLVTKQLSGKRLFVIDAFCGANPDTRLAVRIVTEVAWQAHFVKNMFIRPSDEELQNFKPDFTVMNGSKVTNPNWKEQGLNSENFVAFNITEGVQLIGGTWYGGEMKKGMFSMMNYFLPLKGIASMHCSANVGKDGDVAIFFGLSGTGKTTLSTDPKRQLIGDDEHGWDDDGVFNYEGGCYAKTIKLSAESEPDIYRAIRRDALLENVVVREDGSVDFDDGSKTENTRVSYPIYHIDNIVKPVSKAGHATKVIFLTADAFGVLPPVSKLTPEQTKYYFLSGFTAKLAGTERGITEPTPTFSACFGAAFLSLHPTQYAEVLVKRMKDSGAEAYLVNTGWNGTGKRISIKDTRGIIDAILDGSIESAEMGSLPIFDLAIPKALPGVDPAILDPRDTYADKAQWQAKAEDLASRFVKNFEKYATNEEGKALIAAGPKA</sequence>
<name>PCKA_HISS2</name>
<reference key="1">
    <citation type="submission" date="2008-02" db="EMBL/GenBank/DDBJ databases">
        <title>Complete sequence of Haemophilus somnus 2336.</title>
        <authorList>
            <consortium name="US DOE Joint Genome Institute"/>
            <person name="Siddaramappa S."/>
            <person name="Duncan A.J."/>
            <person name="Challacombe J.F."/>
            <person name="Rainey D."/>
            <person name="Gillaspy A.F."/>
            <person name="Carson M."/>
            <person name="Gipson J."/>
            <person name="Gipson M."/>
            <person name="Bruce D."/>
            <person name="Detter J.C."/>
            <person name="Han C.S."/>
            <person name="Land M."/>
            <person name="Tapia R."/>
            <person name="Thompson L.S."/>
            <person name="Orvis J."/>
            <person name="Zaitshik J."/>
            <person name="Barnes G."/>
            <person name="Brettin T.S."/>
            <person name="Dyer D.W."/>
            <person name="Inzana T.J."/>
        </authorList>
    </citation>
    <scope>NUCLEOTIDE SEQUENCE [LARGE SCALE GENOMIC DNA]</scope>
    <source>
        <strain>2336</strain>
    </source>
</reference>
<feature type="chain" id="PRO_1000080997" description="Phosphoenolpyruvate carboxykinase (ATP)">
    <location>
        <begin position="1"/>
        <end position="538"/>
    </location>
</feature>
<feature type="binding site" evidence="1">
    <location>
        <position position="64"/>
    </location>
    <ligand>
        <name>substrate</name>
    </ligand>
</feature>
<feature type="binding site" evidence="1">
    <location>
        <position position="205"/>
    </location>
    <ligand>
        <name>substrate</name>
    </ligand>
</feature>
<feature type="binding site" evidence="1">
    <location>
        <position position="211"/>
    </location>
    <ligand>
        <name>ATP</name>
        <dbReference type="ChEBI" id="CHEBI:30616"/>
    </ligand>
</feature>
<feature type="binding site" evidence="1">
    <location>
        <position position="211"/>
    </location>
    <ligand>
        <name>Mn(2+)</name>
        <dbReference type="ChEBI" id="CHEBI:29035"/>
    </ligand>
</feature>
<feature type="binding site" evidence="1">
    <location>
        <position position="211"/>
    </location>
    <ligand>
        <name>substrate</name>
    </ligand>
</feature>
<feature type="binding site" evidence="1">
    <location>
        <position position="230"/>
    </location>
    <ligand>
        <name>ATP</name>
        <dbReference type="ChEBI" id="CHEBI:30616"/>
    </ligand>
</feature>
<feature type="binding site" evidence="1">
    <location>
        <position position="230"/>
    </location>
    <ligand>
        <name>Mn(2+)</name>
        <dbReference type="ChEBI" id="CHEBI:29035"/>
    </ligand>
</feature>
<feature type="binding site" evidence="1">
    <location>
        <begin position="246"/>
        <end position="254"/>
    </location>
    <ligand>
        <name>ATP</name>
        <dbReference type="ChEBI" id="CHEBI:30616"/>
    </ligand>
</feature>
<feature type="binding site" evidence="1">
    <location>
        <position position="267"/>
    </location>
    <ligand>
        <name>Mn(2+)</name>
        <dbReference type="ChEBI" id="CHEBI:29035"/>
    </ligand>
</feature>
<feature type="binding site" evidence="1">
    <location>
        <position position="295"/>
    </location>
    <ligand>
        <name>ATP</name>
        <dbReference type="ChEBI" id="CHEBI:30616"/>
    </ligand>
</feature>
<feature type="binding site" evidence="1">
    <location>
        <position position="331"/>
    </location>
    <ligand>
        <name>ATP</name>
        <dbReference type="ChEBI" id="CHEBI:30616"/>
    </ligand>
</feature>
<feature type="binding site" evidence="1">
    <location>
        <position position="331"/>
    </location>
    <ligand>
        <name>substrate</name>
    </ligand>
</feature>
<feature type="binding site" evidence="1">
    <location>
        <begin position="447"/>
        <end position="448"/>
    </location>
    <ligand>
        <name>ATP</name>
        <dbReference type="ChEBI" id="CHEBI:30616"/>
    </ligand>
</feature>
<feature type="binding site" evidence="1">
    <location>
        <position position="453"/>
    </location>
    <ligand>
        <name>ATP</name>
        <dbReference type="ChEBI" id="CHEBI:30616"/>
    </ligand>
</feature>
<protein>
    <recommendedName>
        <fullName evidence="1">Phosphoenolpyruvate carboxykinase (ATP)</fullName>
        <shortName evidence="1">PCK</shortName>
        <shortName evidence="1">PEP carboxykinase</shortName>
        <shortName evidence="1">PEPCK</shortName>
        <ecNumber evidence="1">4.1.1.49</ecNumber>
    </recommendedName>
</protein>